<sequence length="71" mass="7494">MKKIVFVLVLMLSSFGAFGQETVSGQFSDALSTPITAEVYKQACDPPLPPAEVSSDWDCCDVCCNPACAGC</sequence>
<dbReference type="EMBL" id="X65999">
    <property type="protein sequence ID" value="CAA46801.1"/>
    <property type="molecule type" value="Genomic_DNA"/>
</dbReference>
<dbReference type="EMBL" id="U09235">
    <property type="protein sequence ID" value="AAA18472.1"/>
    <property type="molecule type" value="Unassigned_DNA"/>
</dbReference>
<dbReference type="PIR" id="S25659">
    <property type="entry name" value="S25659"/>
</dbReference>
<dbReference type="RefSeq" id="WP_038892553.1">
    <property type="nucleotide sequence ID" value="NZ_WJHZ01000017.1"/>
</dbReference>
<dbReference type="GeneID" id="31412359"/>
<dbReference type="GO" id="GO:0005615">
    <property type="term" value="C:extracellular space"/>
    <property type="evidence" value="ECO:0007669"/>
    <property type="project" value="InterPro"/>
</dbReference>
<dbReference type="GO" id="GO:0090729">
    <property type="term" value="F:toxin activity"/>
    <property type="evidence" value="ECO:0007669"/>
    <property type="project" value="UniProtKB-KW"/>
</dbReference>
<dbReference type="InterPro" id="IPR019806">
    <property type="entry name" value="Heat-stable_enterotox_CS"/>
</dbReference>
<dbReference type="InterPro" id="IPR001489">
    <property type="entry name" value="Heat-stable_enterotox_STa"/>
</dbReference>
<dbReference type="Pfam" id="PF02048">
    <property type="entry name" value="Enterotoxin_ST"/>
    <property type="match status" value="1"/>
</dbReference>
<dbReference type="PROSITE" id="PS00273">
    <property type="entry name" value="ENTEROTOXIN_H_STABLE"/>
    <property type="match status" value="1"/>
</dbReference>
<comment type="function">
    <text>Toxin which activates the particulate form of guanylate cyclase and increases cyclic GMP levels within the host intestinal epithelial cells.</text>
</comment>
<comment type="subcellular location">
    <subcellularLocation>
        <location>Secreted</location>
    </subcellularLocation>
</comment>
<comment type="induction">
    <text evidence="4">In cultured cells, expressed only at temperatures &lt;30 degrees Celsius. Under conditions of high osmolarity and alkaline pH (as it is the case in the host's intestine), it is expressed at 37 degrees Celsius.</text>
</comment>
<comment type="miscellaneous">
    <text>Transcription reached a maximum at the entry to the stationary phase and significantly varied in different Y.enterocolitica strains.</text>
</comment>
<comment type="similarity">
    <text evidence="5">Belongs to the heat-stable enterotoxin family.</text>
</comment>
<name>HSTA_YEREN</name>
<gene>
    <name type="primary">ystA</name>
    <name type="synonym">yst</name>
</gene>
<proteinExistence type="evidence at protein level"/>
<accession>P07593</accession>
<feature type="signal peptide" evidence="2">
    <location>
        <begin position="1"/>
        <end position="19"/>
    </location>
</feature>
<feature type="propeptide" id="PRO_0000035137" evidence="3">
    <location>
        <begin position="20"/>
        <end position="53"/>
    </location>
</feature>
<feature type="peptide" id="PRO_0000035138" description="Heat-stable enterotoxin A">
    <location>
        <begin position="54"/>
        <end position="71"/>
    </location>
</feature>
<feature type="disulfide bond" evidence="1">
    <location>
        <begin position="59"/>
        <end position="64"/>
    </location>
</feature>
<feature type="disulfide bond" evidence="1">
    <location>
        <begin position="60"/>
        <end position="68"/>
    </location>
</feature>
<feature type="disulfide bond" evidence="1">
    <location>
        <begin position="63"/>
        <end position="71"/>
    </location>
</feature>
<feature type="sequence variant">
    <original>L</original>
    <variation>S</variation>
    <location>
        <position position="48"/>
    </location>
</feature>
<reference key="1">
    <citation type="journal article" date="1992" name="FEMS Microbiol. Lett.">
        <title>The polymerase chain reaction: an epidemiological tool to differentiate between two clusters of pathogenic Yersinia enterocolitica strains.</title>
        <authorList>
            <person name="Ibrahim A."/>
            <person name="Liesack W."/>
            <person name="Pike S."/>
            <person name="Stackebrandt E."/>
        </authorList>
    </citation>
    <scope>NUCLEOTIDE SEQUENCE [GENOMIC DNA]</scope>
    <source>
        <strain>Serotype O:8</strain>
    </source>
</reference>
<reference key="2">
    <citation type="journal article" date="1990" name="Infect. Immun.">
        <title>Nucleotide sequence of yst, the Yersinia enterocolitica gene encoding the heat-stable enterotoxin, and prevalence of the gene among pathogenic and nonpathogenic yersiniae.</title>
        <authorList>
            <person name="Delor I."/>
            <person name="Kaeckenbeeck A."/>
            <person name="Wauters G."/>
            <person name="Cornelis G.R."/>
        </authorList>
    </citation>
    <scope>NUCLEOTIDE SEQUENCE [GENOMIC DNA]</scope>
    <source>
        <strain>W1024 / Serotype O:9</strain>
    </source>
</reference>
<reference key="3">
    <citation type="journal article" date="1985" name="Eur. J. Biochem.">
        <title>Isolation, primary structure and synthesis of heat-stable enterotoxin produced by Yersinia enterocolitica.</title>
        <authorList>
            <person name="Takao T."/>
            <person name="Tominaga N."/>
            <person name="Yoshimura S."/>
            <person name="Shimonishi Y."/>
            <person name="Hara S."/>
            <person name="Inoue T."/>
            <person name="Miyama A."/>
        </authorList>
    </citation>
    <scope>PROTEIN SEQUENCE OF 54-71</scope>
</reference>
<reference key="4">
    <citation type="journal article" date="1994" name="Mol. Microbiol.">
        <title>Regulation of the Yersinia enterocolitica enterotoxin Yst gene. Influence of growth phase, temperature, osmolarity, pH and bacterial host factors.</title>
        <authorList>
            <person name="Mikulskis A.V."/>
            <person name="Delor I."/>
            <person name="Thi V.H."/>
            <person name="Cornelis G.R."/>
        </authorList>
    </citation>
    <scope>TRANSCRIPTIONAL REGULATION</scope>
</reference>
<evidence type="ECO:0000250" key="1"/>
<evidence type="ECO:0000255" key="2"/>
<evidence type="ECO:0000269" key="3">
    <source>
    </source>
</evidence>
<evidence type="ECO:0000269" key="4">
    <source>
    </source>
</evidence>
<evidence type="ECO:0000305" key="5"/>
<keyword id="KW-0903">Direct protein sequencing</keyword>
<keyword id="KW-1015">Disulfide bond</keyword>
<keyword id="KW-0260">Enterotoxin</keyword>
<keyword id="KW-0964">Secreted</keyword>
<keyword id="KW-0732">Signal</keyword>
<keyword id="KW-0800">Toxin</keyword>
<keyword id="KW-0843">Virulence</keyword>
<organism>
    <name type="scientific">Yersinia enterocolitica</name>
    <dbReference type="NCBI Taxonomy" id="630"/>
    <lineage>
        <taxon>Bacteria</taxon>
        <taxon>Pseudomonadati</taxon>
        <taxon>Pseudomonadota</taxon>
        <taxon>Gammaproteobacteria</taxon>
        <taxon>Enterobacterales</taxon>
        <taxon>Yersiniaceae</taxon>
        <taxon>Yersinia</taxon>
    </lineage>
</organism>
<protein>
    <recommendedName>
        <fullName>Heat-stable enterotoxin A</fullName>
    </recommendedName>
    <alternativeName>
        <fullName>YST-A</fullName>
    </alternativeName>
</protein>